<gene>
    <name type="ORF">AC4</name>
    <name type="ORF">AL4</name>
</gene>
<reference key="1">
    <citation type="journal article" date="1987" name="Microbiol. Immunol.">
        <title>Total nucleotide sequences of the infectious cloned DNAs of bean golden mosaic virus.</title>
        <authorList>
            <person name="Morinaga T."/>
            <person name="Ikegami M."/>
            <person name="Shimotohno K."/>
            <person name="Miura K."/>
        </authorList>
    </citation>
    <scope>NUCLEOTIDE SEQUENCE [GENOMIC DNA]</scope>
    <source>
        <strain>Isolate Puerto Rico-Japan</strain>
    </source>
</reference>
<proteinExistence type="inferred from homology"/>
<keyword id="KW-0945">Host-virus interaction</keyword>
<keyword id="KW-1090">Inhibition of host innate immune response by virus</keyword>
<keyword id="KW-1185">Reference proteome</keyword>
<keyword id="KW-0941">Suppressor of RNA silencing</keyword>
<keyword id="KW-0899">Viral immunoevasion</keyword>
<name>AC4_BGYMJ</name>
<feature type="chain" id="PRO_0000422258" description="Protein AC4">
    <location>
        <begin position="1"/>
        <end position="79"/>
    </location>
</feature>
<feature type="region of interest" description="Disordered" evidence="2">
    <location>
        <begin position="1"/>
        <end position="79"/>
    </location>
</feature>
<feature type="compositionally biased region" description="Polar residues" evidence="2">
    <location>
        <begin position="1"/>
        <end position="13"/>
    </location>
</feature>
<feature type="compositionally biased region" description="Polar residues" evidence="2">
    <location>
        <begin position="38"/>
        <end position="79"/>
    </location>
</feature>
<dbReference type="EMBL" id="D00201">
    <property type="status" value="NOT_ANNOTATED_CDS"/>
    <property type="molecule type" value="Genomic_DNA"/>
</dbReference>
<dbReference type="SMR" id="P0DJX3"/>
<dbReference type="Proteomes" id="UP000008769">
    <property type="component" value="Genome"/>
</dbReference>
<dbReference type="GO" id="GO:0052170">
    <property type="term" value="P:symbiont-mediated suppression of host innate immune response"/>
    <property type="evidence" value="ECO:0007669"/>
    <property type="project" value="UniProtKB-KW"/>
</dbReference>
<dbReference type="InterPro" id="IPR002488">
    <property type="entry name" value="Gemini_C4"/>
</dbReference>
<dbReference type="Pfam" id="PF01492">
    <property type="entry name" value="Gemini_C4"/>
    <property type="match status" value="1"/>
</dbReference>
<sequence>MRLFSSKVNSSAQIKDCSTWYPQPGQHISIRTFRELNQVPTSKNTSTKMESQSNGDNSKSTADLQEEVSSLPTTHTQRH</sequence>
<organism>
    <name type="scientific">Bean golden yellow mosaic virus (isolate Puerto Rico-Japan)</name>
    <name type="common">BGYMV</name>
    <dbReference type="NCBI Taxonomy" id="222449"/>
    <lineage>
        <taxon>Viruses</taxon>
        <taxon>Monodnaviria</taxon>
        <taxon>Shotokuvirae</taxon>
        <taxon>Cressdnaviricota</taxon>
        <taxon>Repensiviricetes</taxon>
        <taxon>Geplafuvirales</taxon>
        <taxon>Geminiviridae</taxon>
        <taxon>Begomovirus</taxon>
        <taxon>Bean golden yellow mosaic virus</taxon>
    </lineage>
</organism>
<accession>P0DJX3</accession>
<evidence type="ECO:0000250" key="1"/>
<evidence type="ECO:0000256" key="2">
    <source>
        <dbReference type="SAM" id="MobiDB-lite"/>
    </source>
</evidence>
<evidence type="ECO:0000305" key="3"/>
<comment type="function">
    <text evidence="1">Pathogenicity determinant. May act as a suppressor of RNA-mediated gene silencing, also known as post-transcriptional gene silencing (PTGS), a mechanism of plant viral defense that limits the accumulation of viral RNAs.</text>
</comment>
<comment type="similarity">
    <text evidence="3">Belongs to the geminiviridae protein AC4/C4 family.</text>
</comment>
<organismHost>
    <name type="scientific">Macroptilium lathyroides</name>
    <dbReference type="NCBI Taxonomy" id="260885"/>
</organismHost>
<organismHost>
    <name type="scientific">Malvastrum coromandelianum</name>
    <dbReference type="NCBI Taxonomy" id="108453"/>
</organismHost>
<organismHost>
    <name type="scientific">Phaseolus lunatus</name>
    <name type="common">Lima bean</name>
    <name type="synonym">Phaseolus limensis</name>
    <dbReference type="NCBI Taxonomy" id="3884"/>
</organismHost>
<organismHost>
    <name type="scientific">Phaseolus vulgaris</name>
    <name type="common">Kidney bean</name>
    <name type="synonym">French bean</name>
    <dbReference type="NCBI Taxonomy" id="3885"/>
</organismHost>
<protein>
    <recommendedName>
        <fullName>Protein AC4</fullName>
    </recommendedName>
    <alternativeName>
        <fullName>Protein AL4</fullName>
    </alternativeName>
</protein>